<proteinExistence type="inferred from homology"/>
<reference key="1">
    <citation type="journal article" date="2003" name="Proc. Natl. Acad. Sci. U.S.A.">
        <title>The complete genome sequence of Mycobacterium bovis.</title>
        <authorList>
            <person name="Garnier T."/>
            <person name="Eiglmeier K."/>
            <person name="Camus J.-C."/>
            <person name="Medina N."/>
            <person name="Mansoor H."/>
            <person name="Pryor M."/>
            <person name="Duthoy S."/>
            <person name="Grondin S."/>
            <person name="Lacroix C."/>
            <person name="Monsempe C."/>
            <person name="Simon S."/>
            <person name="Harris B."/>
            <person name="Atkin R."/>
            <person name="Doggett J."/>
            <person name="Mayes R."/>
            <person name="Keating L."/>
            <person name="Wheeler P.R."/>
            <person name="Parkhill J."/>
            <person name="Barrell B.G."/>
            <person name="Cole S.T."/>
            <person name="Gordon S.V."/>
            <person name="Hewinson R.G."/>
        </authorList>
    </citation>
    <scope>NUCLEOTIDE SEQUENCE [LARGE SCALE GENOMIC DNA]</scope>
    <source>
        <strain>ATCC BAA-935 / AF2122/97</strain>
    </source>
</reference>
<reference key="2">
    <citation type="journal article" date="2017" name="Genome Announc.">
        <title>Updated reference genome sequence and annotation of Mycobacterium bovis AF2122/97.</title>
        <authorList>
            <person name="Malone K.M."/>
            <person name="Farrell D."/>
            <person name="Stuber T.P."/>
            <person name="Schubert O.T."/>
            <person name="Aebersold R."/>
            <person name="Robbe-Austerman S."/>
            <person name="Gordon S.V."/>
        </authorList>
    </citation>
    <scope>NUCLEOTIDE SEQUENCE [LARGE SCALE GENOMIC DNA]</scope>
    <scope>GENOME REANNOTATION</scope>
    <source>
        <strain>ATCC BAA-935 / AF2122/97</strain>
    </source>
</reference>
<name>BTB7_MYCBO</name>
<gene>
    <name type="ordered locus">BQ2027_MB3247C</name>
</gene>
<sequence length="71" mass="7306">MAEDVRAEIVASVLEVVVNEGDQIDKGDVVVLLESMKMEIPVLAEAAGTVSKVAVSVGDVIQAGDLIAVIS</sequence>
<dbReference type="EMBL" id="LT708304">
    <property type="protein sequence ID" value="SIU01876.1"/>
    <property type="molecule type" value="Genomic_DNA"/>
</dbReference>
<dbReference type="RefSeq" id="NP_856892.1">
    <property type="nucleotide sequence ID" value="NC_002945.3"/>
</dbReference>
<dbReference type="RefSeq" id="WP_003416887.1">
    <property type="nucleotide sequence ID" value="NC_002945.4"/>
</dbReference>
<dbReference type="SMR" id="P0A511"/>
<dbReference type="KEGG" id="mbo:BQ2027_MB3247C"/>
<dbReference type="PATRIC" id="fig|233413.5.peg.3575"/>
<dbReference type="Proteomes" id="UP000001419">
    <property type="component" value="Chromosome"/>
</dbReference>
<dbReference type="CDD" id="cd06850">
    <property type="entry name" value="biotinyl_domain"/>
    <property type="match status" value="1"/>
</dbReference>
<dbReference type="Gene3D" id="2.40.50.100">
    <property type="match status" value="1"/>
</dbReference>
<dbReference type="InterPro" id="IPR050709">
    <property type="entry name" value="Biotin_Carboxyl_Carrier/Decarb"/>
</dbReference>
<dbReference type="InterPro" id="IPR000089">
    <property type="entry name" value="Biotin_lipoyl"/>
</dbReference>
<dbReference type="InterPro" id="IPR011053">
    <property type="entry name" value="Single_hybrid_motif"/>
</dbReference>
<dbReference type="NCBIfam" id="NF004547">
    <property type="entry name" value="PRK05889.1"/>
    <property type="match status" value="1"/>
</dbReference>
<dbReference type="PANTHER" id="PTHR45266">
    <property type="entry name" value="OXALOACETATE DECARBOXYLASE ALPHA CHAIN"/>
    <property type="match status" value="1"/>
</dbReference>
<dbReference type="PANTHER" id="PTHR45266:SF3">
    <property type="entry name" value="OXALOACETATE DECARBOXYLASE ALPHA CHAIN"/>
    <property type="match status" value="1"/>
</dbReference>
<dbReference type="Pfam" id="PF00364">
    <property type="entry name" value="Biotin_lipoyl"/>
    <property type="match status" value="1"/>
</dbReference>
<dbReference type="SUPFAM" id="SSF51230">
    <property type="entry name" value="Single hybrid motif"/>
    <property type="match status" value="1"/>
</dbReference>
<dbReference type="PROSITE" id="PS50968">
    <property type="entry name" value="BIOTINYL_LIPOYL"/>
    <property type="match status" value="1"/>
</dbReference>
<organism>
    <name type="scientific">Mycobacterium bovis (strain ATCC BAA-935 / AF2122/97)</name>
    <dbReference type="NCBI Taxonomy" id="233413"/>
    <lineage>
        <taxon>Bacteria</taxon>
        <taxon>Bacillati</taxon>
        <taxon>Actinomycetota</taxon>
        <taxon>Actinomycetes</taxon>
        <taxon>Mycobacteriales</taxon>
        <taxon>Mycobacteriaceae</taxon>
        <taxon>Mycobacterium</taxon>
        <taxon>Mycobacterium tuberculosis complex</taxon>
    </lineage>
</organism>
<feature type="initiator methionine" description="Removed" evidence="1">
    <location>
        <position position="1"/>
    </location>
</feature>
<feature type="chain" id="PRO_0000146835" description="Biotinylated protein TB7.3">
    <location>
        <begin position="2"/>
        <end position="71"/>
    </location>
</feature>
<feature type="domain" description="Biotinyl-binding" evidence="2">
    <location>
        <begin position="2"/>
        <end position="71"/>
    </location>
</feature>
<feature type="modified residue" description="N6-biotinyllysine" evidence="1 2">
    <location>
        <position position="37"/>
    </location>
</feature>
<protein>
    <recommendedName>
        <fullName>Biotinylated protein TB7.3</fullName>
    </recommendedName>
</protein>
<evidence type="ECO:0000250" key="1"/>
<evidence type="ECO:0000255" key="2">
    <source>
        <dbReference type="PROSITE-ProRule" id="PRU01066"/>
    </source>
</evidence>
<keyword id="KW-0092">Biotin</keyword>
<keyword id="KW-1185">Reference proteome</keyword>
<accession>P0A511</accession>
<accession>A0A1R3Y444</accession>
<accession>O05845</accession>
<accession>X2BMX3</accession>